<proteinExistence type="evidence at protein level"/>
<sequence length="293" mass="33101">MNKDLKGLYAALLVPFDENGQVNEQGLKQIAQNAIETEELDGLYVNGSSGENFLLNTEQKKQVFKVAKEAVGDKVKLIAQVGSLDLNEAIELGKYATELGYDALSAVTPFYYPFTFEEIRDYYFDIIEATQNNMIIYAIPDLTGVNISIEQFSELFNHEKIVGVKYTAPNFFLLERIRKAFPDKLILSGFDEMLVQATISGVDGAIGSTYNVNGRRARKIFDLARQGQIQEAYQLQHDSNDIIETVLSMGIYPTLKEILRHRDIDAGLPKRPFKPFNEAHRQTLDQLIAKYDL</sequence>
<protein>
    <recommendedName>
        <fullName evidence="1">N-acetylneuraminate lyase</fullName>
        <shortName evidence="1">NAL</shortName>
        <shortName evidence="1">Neu5Ac lyase</shortName>
        <ecNumber evidence="1">4.1.3.3</ecNumber>
    </recommendedName>
    <alternativeName>
        <fullName evidence="1">N-acetylneuraminate pyruvate-lyase</fullName>
    </alternativeName>
    <alternativeName>
        <fullName evidence="1">N-acetylneuraminic acid aldolase</fullName>
    </alternativeName>
    <alternativeName>
        <fullName evidence="1">Sialate lyase</fullName>
    </alternativeName>
    <alternativeName>
        <fullName evidence="1">Sialic acid aldolase</fullName>
    </alternativeName>
    <alternativeName>
        <fullName evidence="1">Sialic acid lyase</fullName>
    </alternativeName>
</protein>
<accession>P99123</accession>
<accession>Q99WR1</accession>
<name>NANA_STAAN</name>
<dbReference type="EC" id="4.1.3.3" evidence="1"/>
<dbReference type="EMBL" id="BA000018">
    <property type="protein sequence ID" value="BAB41528.1"/>
    <property type="molecule type" value="Genomic_DNA"/>
</dbReference>
<dbReference type="PIR" id="E89796">
    <property type="entry name" value="E89796"/>
</dbReference>
<dbReference type="RefSeq" id="WP_001030736.1">
    <property type="nucleotide sequence ID" value="NC_002745.2"/>
</dbReference>
<dbReference type="SMR" id="P99123"/>
<dbReference type="EnsemblBacteria" id="BAB41528">
    <property type="protein sequence ID" value="BAB41528"/>
    <property type="gene ID" value="BAB41528"/>
</dbReference>
<dbReference type="KEGG" id="sau:SA0304"/>
<dbReference type="HOGENOM" id="CLU_049343_5_1_9"/>
<dbReference type="UniPathway" id="UPA00629">
    <property type="reaction ID" value="UER00680"/>
</dbReference>
<dbReference type="GO" id="GO:0005829">
    <property type="term" value="C:cytosol"/>
    <property type="evidence" value="ECO:0007669"/>
    <property type="project" value="TreeGrafter"/>
</dbReference>
<dbReference type="GO" id="GO:0008747">
    <property type="term" value="F:N-acetylneuraminate lyase activity"/>
    <property type="evidence" value="ECO:0007669"/>
    <property type="project" value="UniProtKB-UniRule"/>
</dbReference>
<dbReference type="GO" id="GO:0005975">
    <property type="term" value="P:carbohydrate metabolic process"/>
    <property type="evidence" value="ECO:0007669"/>
    <property type="project" value="UniProtKB-UniRule"/>
</dbReference>
<dbReference type="GO" id="GO:0019262">
    <property type="term" value="P:N-acetylneuraminate catabolic process"/>
    <property type="evidence" value="ECO:0007669"/>
    <property type="project" value="UniProtKB-UniRule"/>
</dbReference>
<dbReference type="CDD" id="cd00954">
    <property type="entry name" value="NAL"/>
    <property type="match status" value="1"/>
</dbReference>
<dbReference type="FunFam" id="3.20.20.70:FF:000039">
    <property type="entry name" value="N-acetylneuraminate lyase"/>
    <property type="match status" value="1"/>
</dbReference>
<dbReference type="Gene3D" id="3.20.20.70">
    <property type="entry name" value="Aldolase class I"/>
    <property type="match status" value="1"/>
</dbReference>
<dbReference type="HAMAP" id="MF_01237">
    <property type="entry name" value="N_acetylneuram_lyase"/>
    <property type="match status" value="1"/>
</dbReference>
<dbReference type="InterPro" id="IPR013785">
    <property type="entry name" value="Aldolase_TIM"/>
</dbReference>
<dbReference type="InterPro" id="IPR002220">
    <property type="entry name" value="DapA-like"/>
</dbReference>
<dbReference type="InterPro" id="IPR005264">
    <property type="entry name" value="NanA"/>
</dbReference>
<dbReference type="InterPro" id="IPR020625">
    <property type="entry name" value="Schiff_base-form_aldolases_AS"/>
</dbReference>
<dbReference type="NCBIfam" id="NF003164">
    <property type="entry name" value="PRK04147.1"/>
    <property type="match status" value="1"/>
</dbReference>
<dbReference type="PANTHER" id="PTHR42849">
    <property type="entry name" value="N-ACETYLNEURAMINATE LYASE"/>
    <property type="match status" value="1"/>
</dbReference>
<dbReference type="PANTHER" id="PTHR42849:SF1">
    <property type="entry name" value="N-ACETYLNEURAMINATE LYASE"/>
    <property type="match status" value="1"/>
</dbReference>
<dbReference type="Pfam" id="PF00701">
    <property type="entry name" value="DHDPS"/>
    <property type="match status" value="1"/>
</dbReference>
<dbReference type="PIRSF" id="PIRSF001365">
    <property type="entry name" value="DHDPS"/>
    <property type="match status" value="1"/>
</dbReference>
<dbReference type="PRINTS" id="PR00146">
    <property type="entry name" value="DHPICSNTHASE"/>
</dbReference>
<dbReference type="SMART" id="SM01130">
    <property type="entry name" value="DHDPS"/>
    <property type="match status" value="1"/>
</dbReference>
<dbReference type="SUPFAM" id="SSF51569">
    <property type="entry name" value="Aldolase"/>
    <property type="match status" value="1"/>
</dbReference>
<dbReference type="PROSITE" id="PS00666">
    <property type="entry name" value="DHDPS_2"/>
    <property type="match status" value="1"/>
</dbReference>
<organism>
    <name type="scientific">Staphylococcus aureus (strain N315)</name>
    <dbReference type="NCBI Taxonomy" id="158879"/>
    <lineage>
        <taxon>Bacteria</taxon>
        <taxon>Bacillati</taxon>
        <taxon>Bacillota</taxon>
        <taxon>Bacilli</taxon>
        <taxon>Bacillales</taxon>
        <taxon>Staphylococcaceae</taxon>
        <taxon>Staphylococcus</taxon>
    </lineage>
</organism>
<comment type="function">
    <text evidence="1">Catalyzes the reversible aldol cleavage of N-acetylneuraminic acid (sialic acid; Neu5Ac) to form pyruvate and N-acetylmannosamine (ManNAc) via a Schiff base intermediate.</text>
</comment>
<comment type="catalytic activity">
    <reaction evidence="1">
        <text>aceneuramate = aldehydo-N-acetyl-D-mannosamine + pyruvate</text>
        <dbReference type="Rhea" id="RHEA:23296"/>
        <dbReference type="ChEBI" id="CHEBI:15361"/>
        <dbReference type="ChEBI" id="CHEBI:17122"/>
        <dbReference type="ChEBI" id="CHEBI:173083"/>
        <dbReference type="EC" id="4.1.3.3"/>
    </reaction>
</comment>
<comment type="pathway">
    <text evidence="1">Amino-sugar metabolism; N-acetylneuraminate degradation; D-fructose 6-phosphate from N-acetylneuraminate: step 1/5.</text>
</comment>
<comment type="subunit">
    <text evidence="1">Homotetramer.</text>
</comment>
<comment type="subcellular location">
    <subcellularLocation>
        <location evidence="1">Cytoplasm</location>
    </subcellularLocation>
</comment>
<comment type="similarity">
    <text evidence="1">Belongs to the DapA family. NanA subfamily.</text>
</comment>
<evidence type="ECO:0000255" key="1">
    <source>
        <dbReference type="HAMAP-Rule" id="MF_01237"/>
    </source>
</evidence>
<reference key="1">
    <citation type="journal article" date="2001" name="Lancet">
        <title>Whole genome sequencing of meticillin-resistant Staphylococcus aureus.</title>
        <authorList>
            <person name="Kuroda M."/>
            <person name="Ohta T."/>
            <person name="Uchiyama I."/>
            <person name="Baba T."/>
            <person name="Yuzawa H."/>
            <person name="Kobayashi I."/>
            <person name="Cui L."/>
            <person name="Oguchi A."/>
            <person name="Aoki K."/>
            <person name="Nagai Y."/>
            <person name="Lian J.-Q."/>
            <person name="Ito T."/>
            <person name="Kanamori M."/>
            <person name="Matsumaru H."/>
            <person name="Maruyama A."/>
            <person name="Murakami H."/>
            <person name="Hosoyama A."/>
            <person name="Mizutani-Ui Y."/>
            <person name="Takahashi N.K."/>
            <person name="Sawano T."/>
            <person name="Inoue R."/>
            <person name="Kaito C."/>
            <person name="Sekimizu K."/>
            <person name="Hirakawa H."/>
            <person name="Kuhara S."/>
            <person name="Goto S."/>
            <person name="Yabuzaki J."/>
            <person name="Kanehisa M."/>
            <person name="Yamashita A."/>
            <person name="Oshima K."/>
            <person name="Furuya K."/>
            <person name="Yoshino C."/>
            <person name="Shiba T."/>
            <person name="Hattori M."/>
            <person name="Ogasawara N."/>
            <person name="Hayashi H."/>
            <person name="Hiramatsu K."/>
        </authorList>
    </citation>
    <scope>NUCLEOTIDE SEQUENCE [LARGE SCALE GENOMIC DNA]</scope>
    <source>
        <strain>N315</strain>
    </source>
</reference>
<reference key="2">
    <citation type="journal article" date="2005" name="J. Microbiol. Methods">
        <title>Correlation of proteomic and transcriptomic profiles of Staphylococcus aureus during the post-exponential phase of growth.</title>
        <authorList>
            <person name="Scherl A."/>
            <person name="Francois P."/>
            <person name="Bento M."/>
            <person name="Deshusses J.M."/>
            <person name="Charbonnier Y."/>
            <person name="Converset V."/>
            <person name="Huyghe A."/>
            <person name="Walter N."/>
            <person name="Hoogland C."/>
            <person name="Appel R.D."/>
            <person name="Sanchez J.-C."/>
            <person name="Zimmermann-Ivol C.G."/>
            <person name="Corthals G.L."/>
            <person name="Hochstrasser D.F."/>
            <person name="Schrenzel J."/>
        </authorList>
    </citation>
    <scope>IDENTIFICATION BY MASS SPECTROMETRY</scope>
    <source>
        <strain>N315</strain>
    </source>
</reference>
<keyword id="KW-0119">Carbohydrate metabolism</keyword>
<keyword id="KW-0963">Cytoplasm</keyword>
<keyword id="KW-0456">Lyase</keyword>
<keyword id="KW-0704">Schiff base</keyword>
<gene>
    <name evidence="1" type="primary">nanA</name>
    <name type="ordered locus">SA0304</name>
</gene>
<feature type="chain" id="PRO_0000103223" description="N-acetylneuraminate lyase">
    <location>
        <begin position="1"/>
        <end position="293"/>
    </location>
</feature>
<feature type="active site" description="Proton donor" evidence="1">
    <location>
        <position position="137"/>
    </location>
</feature>
<feature type="active site" description="Schiff-base intermediate with substrate" evidence="1">
    <location>
        <position position="165"/>
    </location>
</feature>
<feature type="binding site" evidence="1">
    <location>
        <position position="48"/>
    </location>
    <ligand>
        <name>aceneuramate</name>
        <dbReference type="ChEBI" id="CHEBI:173083"/>
    </ligand>
</feature>
<feature type="binding site" evidence="1">
    <location>
        <position position="49"/>
    </location>
    <ligand>
        <name>aceneuramate</name>
        <dbReference type="ChEBI" id="CHEBI:173083"/>
    </ligand>
</feature>
<feature type="binding site" evidence="1">
    <location>
        <position position="167"/>
    </location>
    <ligand>
        <name>aceneuramate</name>
        <dbReference type="ChEBI" id="CHEBI:173083"/>
    </ligand>
</feature>
<feature type="binding site" evidence="1">
    <location>
        <position position="189"/>
    </location>
    <ligand>
        <name>aceneuramate</name>
        <dbReference type="ChEBI" id="CHEBI:173083"/>
    </ligand>
</feature>
<feature type="binding site" evidence="1">
    <location>
        <position position="191"/>
    </location>
    <ligand>
        <name>aceneuramate</name>
        <dbReference type="ChEBI" id="CHEBI:173083"/>
    </ligand>
</feature>
<feature type="binding site" evidence="1">
    <location>
        <position position="192"/>
    </location>
    <ligand>
        <name>aceneuramate</name>
        <dbReference type="ChEBI" id="CHEBI:173083"/>
    </ligand>
</feature>
<feature type="binding site" evidence="1">
    <location>
        <position position="208"/>
    </location>
    <ligand>
        <name>aceneuramate</name>
        <dbReference type="ChEBI" id="CHEBI:173083"/>
    </ligand>
</feature>